<organism>
    <name type="scientific">Arabidopsis thaliana</name>
    <name type="common">Mouse-ear cress</name>
    <dbReference type="NCBI Taxonomy" id="3702"/>
    <lineage>
        <taxon>Eukaryota</taxon>
        <taxon>Viridiplantae</taxon>
        <taxon>Streptophyta</taxon>
        <taxon>Embryophyta</taxon>
        <taxon>Tracheophyta</taxon>
        <taxon>Spermatophyta</taxon>
        <taxon>Magnoliopsida</taxon>
        <taxon>eudicotyledons</taxon>
        <taxon>Gunneridae</taxon>
        <taxon>Pentapetalae</taxon>
        <taxon>rosids</taxon>
        <taxon>malvids</taxon>
        <taxon>Brassicales</taxon>
        <taxon>Brassicaceae</taxon>
        <taxon>Camelineae</taxon>
        <taxon>Arabidopsis</taxon>
    </lineage>
</organism>
<feature type="chain" id="PRO_0000421329" description="WAT1-related protein At3g28080">
    <location>
        <begin position="1"/>
        <end position="358"/>
    </location>
</feature>
<feature type="transmembrane region" description="Helical" evidence="2">
    <location>
        <begin position="12"/>
        <end position="32"/>
    </location>
</feature>
<feature type="transmembrane region" description="Helical" evidence="2">
    <location>
        <begin position="42"/>
        <end position="62"/>
    </location>
</feature>
<feature type="transmembrane region" description="Helical" evidence="2">
    <location>
        <begin position="81"/>
        <end position="101"/>
    </location>
</feature>
<feature type="transmembrane region" description="Helical" evidence="2">
    <location>
        <begin position="105"/>
        <end position="125"/>
    </location>
</feature>
<feature type="transmembrane region" description="Helical" evidence="2">
    <location>
        <begin position="137"/>
        <end position="157"/>
    </location>
</feature>
<feature type="transmembrane region" description="Helical" evidence="2">
    <location>
        <begin position="187"/>
        <end position="207"/>
    </location>
</feature>
<feature type="transmembrane region" description="Helical" evidence="2">
    <location>
        <begin position="219"/>
        <end position="239"/>
    </location>
</feature>
<feature type="transmembrane region" description="Helical" evidence="2">
    <location>
        <begin position="245"/>
        <end position="265"/>
    </location>
</feature>
<feature type="transmembrane region" description="Helical" evidence="2">
    <location>
        <begin position="283"/>
        <end position="303"/>
    </location>
</feature>
<feature type="transmembrane region" description="Helical" evidence="2">
    <location>
        <begin position="308"/>
        <end position="328"/>
    </location>
</feature>
<feature type="domain" description="EamA">
    <location>
        <begin position="27"/>
        <end position="155"/>
    </location>
</feature>
<feature type="splice variant" id="VSP_045507" description="In isoform 2." evidence="3">
    <location>
        <begin position="66"/>
        <end position="73"/>
    </location>
</feature>
<feature type="sequence conflict" description="In Ref. 4; AAM67276." evidence="4" ref="4">
    <original>T</original>
    <variation>A</variation>
    <location>
        <position position="209"/>
    </location>
</feature>
<feature type="sequence conflict" description="In Ref. 4; AAM67276." evidence="4" ref="4">
    <original>R</original>
    <variation>G</variation>
    <location>
        <position position="281"/>
    </location>
</feature>
<feature type="sequence conflict" description="In Ref. 4; AAM67276." evidence="4" ref="4">
    <original>V</original>
    <variation>A</variation>
    <location>
        <position position="325"/>
    </location>
</feature>
<feature type="sequence conflict" description="In Ref. 4; AAM67276." evidence="4" ref="4">
    <original>A</original>
    <variation>S</variation>
    <location>
        <position position="331"/>
    </location>
</feature>
<feature type="sequence conflict" description="In Ref. 4; AAM67276." evidence="4" ref="4">
    <original>N</original>
    <variation>D</variation>
    <location>
        <position position="336"/>
    </location>
</feature>
<feature type="sequence conflict" description="In Ref. 4; AAM67276." evidence="4" ref="4">
    <original>DQI</original>
    <variation>EQV</variation>
    <location>
        <begin position="356"/>
        <end position="358"/>
    </location>
</feature>
<evidence type="ECO:0000250" key="1"/>
<evidence type="ECO:0000255" key="2"/>
<evidence type="ECO:0000303" key="3">
    <source>
    </source>
</evidence>
<evidence type="ECO:0000305" key="4"/>
<reference key="1">
    <citation type="journal article" date="2000" name="DNA Res.">
        <title>Structural analysis of Arabidopsis thaliana chromosome 3. II. Sequence features of the 4,251,695 bp regions covered by 90 P1, TAC and BAC clones.</title>
        <authorList>
            <person name="Kaneko T."/>
            <person name="Katoh T."/>
            <person name="Sato S."/>
            <person name="Nakamura Y."/>
            <person name="Asamizu E."/>
            <person name="Tabata S."/>
        </authorList>
    </citation>
    <scope>NUCLEOTIDE SEQUENCE [LARGE SCALE GENOMIC DNA]</scope>
    <source>
        <strain>cv. Columbia</strain>
    </source>
</reference>
<reference key="2">
    <citation type="journal article" date="2017" name="Plant J.">
        <title>Araport11: a complete reannotation of the Arabidopsis thaliana reference genome.</title>
        <authorList>
            <person name="Cheng C.Y."/>
            <person name="Krishnakumar V."/>
            <person name="Chan A.P."/>
            <person name="Thibaud-Nissen F."/>
            <person name="Schobel S."/>
            <person name="Town C.D."/>
        </authorList>
    </citation>
    <scope>GENOME REANNOTATION</scope>
    <source>
        <strain>cv. Columbia</strain>
    </source>
</reference>
<reference key="3">
    <citation type="journal article" date="2003" name="Science">
        <title>Empirical analysis of transcriptional activity in the Arabidopsis genome.</title>
        <authorList>
            <person name="Yamada K."/>
            <person name="Lim J."/>
            <person name="Dale J.M."/>
            <person name="Chen H."/>
            <person name="Shinn P."/>
            <person name="Palm C.J."/>
            <person name="Southwick A.M."/>
            <person name="Wu H.C."/>
            <person name="Kim C.J."/>
            <person name="Nguyen M."/>
            <person name="Pham P.K."/>
            <person name="Cheuk R.F."/>
            <person name="Karlin-Newmann G."/>
            <person name="Liu S.X."/>
            <person name="Lam B."/>
            <person name="Sakano H."/>
            <person name="Wu T."/>
            <person name="Yu G."/>
            <person name="Miranda M."/>
            <person name="Quach H.L."/>
            <person name="Tripp M."/>
            <person name="Chang C.H."/>
            <person name="Lee J.M."/>
            <person name="Toriumi M.J."/>
            <person name="Chan M.M."/>
            <person name="Tang C.C."/>
            <person name="Onodera C.S."/>
            <person name="Deng J.M."/>
            <person name="Akiyama K."/>
            <person name="Ansari Y."/>
            <person name="Arakawa T."/>
            <person name="Banh J."/>
            <person name="Banno F."/>
            <person name="Bowser L."/>
            <person name="Brooks S.Y."/>
            <person name="Carninci P."/>
            <person name="Chao Q."/>
            <person name="Choy N."/>
            <person name="Enju A."/>
            <person name="Goldsmith A.D."/>
            <person name="Gurjal M."/>
            <person name="Hansen N.F."/>
            <person name="Hayashizaki Y."/>
            <person name="Johnson-Hopson C."/>
            <person name="Hsuan V.W."/>
            <person name="Iida K."/>
            <person name="Karnes M."/>
            <person name="Khan S."/>
            <person name="Koesema E."/>
            <person name="Ishida J."/>
            <person name="Jiang P.X."/>
            <person name="Jones T."/>
            <person name="Kawai J."/>
            <person name="Kamiya A."/>
            <person name="Meyers C."/>
            <person name="Nakajima M."/>
            <person name="Narusaka M."/>
            <person name="Seki M."/>
            <person name="Sakurai T."/>
            <person name="Satou M."/>
            <person name="Tamse R."/>
            <person name="Vaysberg M."/>
            <person name="Wallender E.K."/>
            <person name="Wong C."/>
            <person name="Yamamura Y."/>
            <person name="Yuan S."/>
            <person name="Shinozaki K."/>
            <person name="Davis R.W."/>
            <person name="Theologis A."/>
            <person name="Ecker J.R."/>
        </authorList>
    </citation>
    <scope>NUCLEOTIDE SEQUENCE [LARGE SCALE MRNA] (ISOFORM 2)</scope>
    <source>
        <strain>cv. Columbia</strain>
    </source>
</reference>
<reference key="4">
    <citation type="submission" date="2002-03" db="EMBL/GenBank/DDBJ databases">
        <title>Full-length cDNA from Arabidopsis thaliana.</title>
        <authorList>
            <person name="Brover V.V."/>
            <person name="Troukhan M.E."/>
            <person name="Alexandrov N.A."/>
            <person name="Lu Y.-P."/>
            <person name="Flavell R.B."/>
            <person name="Feldmann K.A."/>
        </authorList>
    </citation>
    <scope>NUCLEOTIDE SEQUENCE [LARGE SCALE MRNA] (ISOFORM 1)</scope>
</reference>
<protein>
    <recommendedName>
        <fullName>WAT1-related protein At3g28080</fullName>
    </recommendedName>
</protein>
<sequence>MAGAVSLWRREAVFLTAMLAGETSIVGLSTLFKVATSKGLNIYPFLSYSYLLASLLLLPSLFFTNRSRSLPPLSASILSKIGLLGFLGSMYVITGGIGIEYSNPTLASAIGNIVPALTFILAVIFRMEKVSFKERSSVAKVMGTILSLIGAFVVIFYHGPRVFVASSPPYLNFRQLSPPLSSSKSDWLIGGAILTIQGIFVSVSFILQTHIMREYPEAFTVSILYILCISIVTSMIGLVVEKNNPSIWIIHFDITLFTIVTTGIITSVYYVIHSWAIRHKRPLYLAIFKPLSILIAVVMGTIFLNDSLYLGCLIGGILITLGFYVVMWGKANEEKNKLLSFSGKEKTPLLLSGKNDQI</sequence>
<comment type="subcellular location">
    <subcellularLocation>
        <location evidence="1">Membrane</location>
        <topology evidence="4">Multi-pass membrane protein</topology>
    </subcellularLocation>
</comment>
<comment type="alternative products">
    <event type="alternative splicing"/>
    <isoform>
        <id>F4IYZ0-1</id>
        <name>1</name>
        <sequence type="displayed"/>
    </isoform>
    <isoform>
        <id>F4IYZ0-2</id>
        <name>2</name>
        <sequence type="described" ref="VSP_045507"/>
    </isoform>
    <text>Additional isoforms seem to exist.</text>
</comment>
<comment type="similarity">
    <text evidence="4">Belongs to the drug/metabolite transporter (DMT) superfamily. Plant drug/metabolite exporter (P-DME) (TC 2.A.7.4) family.</text>
</comment>
<accession>F4IYZ0</accession>
<accession>Q8LGC4</accession>
<accession>Q8VZL5</accession>
<keyword id="KW-0025">Alternative splicing</keyword>
<keyword id="KW-0472">Membrane</keyword>
<keyword id="KW-1185">Reference proteome</keyword>
<keyword id="KW-0812">Transmembrane</keyword>
<keyword id="KW-1133">Transmembrane helix</keyword>
<dbReference type="EMBL" id="AB028616">
    <property type="status" value="NOT_ANNOTATED_CDS"/>
    <property type="molecule type" value="Genomic_DNA"/>
</dbReference>
<dbReference type="EMBL" id="CP002686">
    <property type="protein sequence ID" value="AEE77400.1"/>
    <property type="molecule type" value="Genomic_DNA"/>
</dbReference>
<dbReference type="EMBL" id="CP002686">
    <property type="protein sequence ID" value="AEE77401.1"/>
    <property type="molecule type" value="Genomic_DNA"/>
</dbReference>
<dbReference type="EMBL" id="AY064026">
    <property type="protein sequence ID" value="AAL36382.1"/>
    <property type="molecule type" value="mRNA"/>
</dbReference>
<dbReference type="EMBL" id="AY117190">
    <property type="protein sequence ID" value="AAM51265.1"/>
    <property type="molecule type" value="mRNA"/>
</dbReference>
<dbReference type="EMBL" id="AY084349">
    <property type="protein sequence ID" value="AAM67276.1"/>
    <property type="molecule type" value="mRNA"/>
</dbReference>
<dbReference type="RefSeq" id="NP_566832.1">
    <molecule id="F4IYZ0-1"/>
    <property type="nucleotide sequence ID" value="NM_113726.4"/>
</dbReference>
<dbReference type="RefSeq" id="NP_850642.1">
    <molecule id="F4IYZ0-2"/>
    <property type="nucleotide sequence ID" value="NM_180311.2"/>
</dbReference>
<dbReference type="SMR" id="F4IYZ0"/>
<dbReference type="BioGRID" id="7762">
    <property type="interactions" value="3"/>
</dbReference>
<dbReference type="FunCoup" id="F4IYZ0">
    <property type="interactions" value="34"/>
</dbReference>
<dbReference type="IntAct" id="F4IYZ0">
    <property type="interactions" value="4"/>
</dbReference>
<dbReference type="STRING" id="3702.F4IYZ0"/>
<dbReference type="PaxDb" id="3702-AT3G28080.1"/>
<dbReference type="EnsemblPlants" id="AT3G28080.1">
    <molecule id="F4IYZ0-1"/>
    <property type="protein sequence ID" value="AT3G28080.1"/>
    <property type="gene ID" value="AT3G28080"/>
</dbReference>
<dbReference type="EnsemblPlants" id="AT3G28080.2">
    <molecule id="F4IYZ0-2"/>
    <property type="protein sequence ID" value="AT3G28080.2"/>
    <property type="gene ID" value="AT3G28080"/>
</dbReference>
<dbReference type="Gramene" id="AT3G28080.1">
    <molecule id="F4IYZ0-1"/>
    <property type="protein sequence ID" value="AT3G28080.1"/>
    <property type="gene ID" value="AT3G28080"/>
</dbReference>
<dbReference type="Gramene" id="AT3G28080.2">
    <molecule id="F4IYZ0-2"/>
    <property type="protein sequence ID" value="AT3G28080.2"/>
    <property type="gene ID" value="AT3G28080"/>
</dbReference>
<dbReference type="KEGG" id="ath:AT3G28080"/>
<dbReference type="Araport" id="AT3G28080"/>
<dbReference type="TAIR" id="AT3G28080">
    <property type="gene designation" value="UMAMIT47"/>
</dbReference>
<dbReference type="eggNOG" id="ENOG502QRQK">
    <property type="taxonomic scope" value="Eukaryota"/>
</dbReference>
<dbReference type="InParanoid" id="F4IYZ0"/>
<dbReference type="OMA" id="GNECNDM"/>
<dbReference type="PhylomeDB" id="F4IYZ0"/>
<dbReference type="PRO" id="PR:F4IYZ0"/>
<dbReference type="Proteomes" id="UP000006548">
    <property type="component" value="Chromosome 3"/>
</dbReference>
<dbReference type="ExpressionAtlas" id="F4IYZ0">
    <property type="expression patterns" value="baseline and differential"/>
</dbReference>
<dbReference type="GO" id="GO:0016020">
    <property type="term" value="C:membrane"/>
    <property type="evidence" value="ECO:0007669"/>
    <property type="project" value="UniProtKB-SubCell"/>
</dbReference>
<dbReference type="GO" id="GO:0022857">
    <property type="term" value="F:transmembrane transporter activity"/>
    <property type="evidence" value="ECO:0007669"/>
    <property type="project" value="InterPro"/>
</dbReference>
<dbReference type="InterPro" id="IPR000620">
    <property type="entry name" value="EamA_dom"/>
</dbReference>
<dbReference type="InterPro" id="IPR030184">
    <property type="entry name" value="WAT1-related"/>
</dbReference>
<dbReference type="PANTHER" id="PTHR31218">
    <property type="entry name" value="WAT1-RELATED PROTEIN"/>
    <property type="match status" value="1"/>
</dbReference>
<dbReference type="Pfam" id="PF00892">
    <property type="entry name" value="EamA"/>
    <property type="match status" value="1"/>
</dbReference>
<dbReference type="SUPFAM" id="SSF103481">
    <property type="entry name" value="Multidrug resistance efflux transporter EmrE"/>
    <property type="match status" value="2"/>
</dbReference>
<gene>
    <name type="ordered locus">At3g28080</name>
    <name type="ORF">MMG15</name>
</gene>
<proteinExistence type="evidence at transcript level"/>
<name>WTR21_ARATH</name>